<keyword id="KW-0997">Cell inner membrane</keyword>
<keyword id="KW-1003">Cell membrane</keyword>
<keyword id="KW-0328">Glycosyltransferase</keyword>
<keyword id="KW-0472">Membrane</keyword>
<keyword id="KW-1185">Reference proteome</keyword>
<keyword id="KW-0808">Transferase</keyword>
<keyword id="KW-0812">Transmembrane</keyword>
<keyword id="KW-1133">Transmembrane helix</keyword>
<evidence type="ECO:0000250" key="1"/>
<evidence type="ECO:0000255" key="2"/>
<evidence type="ECO:0000305" key="3"/>
<protein>
    <recommendedName>
        <fullName>Glucans biosynthesis glucosyltransferase H</fullName>
        <ecNumber>2.4.1.-</ecNumber>
    </recommendedName>
</protein>
<name>OPGH_CERS4</name>
<reference key="1">
    <citation type="journal article" date="2002" name="Eur. J. Biochem.">
        <title>The opgGIH and opgC genes of Rhodobacter sphaeroides form an operon that controls backbone synthesis and succinylation of osmoregulated periplasmic glucans.</title>
        <authorList>
            <person name="Cogez V."/>
            <person name="Gak E."/>
            <person name="Puskas A."/>
            <person name="Kaplan S."/>
            <person name="Bohin J.-P."/>
        </authorList>
    </citation>
    <scope>NUCLEOTIDE SEQUENCE [GENOMIC DNA]</scope>
</reference>
<reference key="2">
    <citation type="submission" date="2005-09" db="EMBL/GenBank/DDBJ databases">
        <title>Complete sequence of chromosome 1 of Rhodobacter sphaeroides 2.4.1.</title>
        <authorList>
            <person name="Copeland A."/>
            <person name="Lucas S."/>
            <person name="Lapidus A."/>
            <person name="Barry K."/>
            <person name="Detter J.C."/>
            <person name="Glavina T."/>
            <person name="Hammon N."/>
            <person name="Israni S."/>
            <person name="Pitluck S."/>
            <person name="Richardson P."/>
            <person name="Mackenzie C."/>
            <person name="Choudhary M."/>
            <person name="Larimer F."/>
            <person name="Hauser L.J."/>
            <person name="Land M."/>
            <person name="Donohue T.J."/>
            <person name="Kaplan S."/>
        </authorList>
    </citation>
    <scope>NUCLEOTIDE SEQUENCE [LARGE SCALE GENOMIC DNA]</scope>
    <source>
        <strain>ATCC 17023 / DSM 158 / JCM 6121 / CCUG 31486 / LMG 2827 / NBRC 12203 / NCIMB 8253 / ATH 2.4.1.</strain>
    </source>
</reference>
<feature type="chain" id="PRO_0000210360" description="Glucans biosynthesis glucosyltransferase H">
    <location>
        <begin position="1"/>
        <end position="595"/>
    </location>
</feature>
<feature type="transmembrane region" description="Helical" evidence="2">
    <location>
        <begin position="13"/>
        <end position="35"/>
    </location>
</feature>
<feature type="transmembrane region" description="Helical" evidence="2">
    <location>
        <begin position="50"/>
        <end position="72"/>
    </location>
</feature>
<feature type="transmembrane region" description="Helical" evidence="2">
    <location>
        <begin position="365"/>
        <end position="387"/>
    </location>
</feature>
<feature type="transmembrane region" description="Helical" evidence="2">
    <location>
        <begin position="414"/>
        <end position="436"/>
    </location>
</feature>
<feature type="transmembrane region" description="Helical" evidence="2">
    <location>
        <begin position="449"/>
        <end position="471"/>
    </location>
</feature>
<feature type="transmembrane region" description="Helical" evidence="2">
    <location>
        <begin position="526"/>
        <end position="548"/>
    </location>
</feature>
<dbReference type="EC" id="2.4.1.-"/>
<dbReference type="EMBL" id="AF016298">
    <property type="protein sequence ID" value="AAG10643.1"/>
    <property type="molecule type" value="Genomic_DNA"/>
</dbReference>
<dbReference type="EMBL" id="CP000143">
    <property type="protein sequence ID" value="ABA79302.1"/>
    <property type="molecule type" value="Genomic_DNA"/>
</dbReference>
<dbReference type="RefSeq" id="YP_353203.1">
    <property type="nucleotide sequence ID" value="NC_007493.2"/>
</dbReference>
<dbReference type="STRING" id="272943.RSP_0127"/>
<dbReference type="CAZy" id="GT2">
    <property type="family name" value="Glycosyltransferase Family 2"/>
</dbReference>
<dbReference type="EnsemblBacteria" id="ABA79302">
    <property type="protein sequence ID" value="ABA79302"/>
    <property type="gene ID" value="RSP_0127"/>
</dbReference>
<dbReference type="GeneID" id="3719694"/>
<dbReference type="KEGG" id="rsp:RSP_0127"/>
<dbReference type="PATRIC" id="fig|272943.9.peg.2068"/>
<dbReference type="eggNOG" id="COG2943">
    <property type="taxonomic scope" value="Bacteria"/>
</dbReference>
<dbReference type="OrthoDB" id="9775281at2"/>
<dbReference type="PhylomeDB" id="Q9FA52"/>
<dbReference type="UniPathway" id="UPA00637"/>
<dbReference type="Proteomes" id="UP000002703">
    <property type="component" value="Chromosome 1"/>
</dbReference>
<dbReference type="GO" id="GO:0005886">
    <property type="term" value="C:plasma membrane"/>
    <property type="evidence" value="ECO:0007669"/>
    <property type="project" value="UniProtKB-SubCell"/>
</dbReference>
<dbReference type="GO" id="GO:0016758">
    <property type="term" value="F:hexosyltransferase activity"/>
    <property type="evidence" value="ECO:0007669"/>
    <property type="project" value="TreeGrafter"/>
</dbReference>
<dbReference type="GO" id="GO:0009058">
    <property type="term" value="P:biosynthetic process"/>
    <property type="evidence" value="ECO:0007669"/>
    <property type="project" value="UniProtKB-ARBA"/>
</dbReference>
<dbReference type="Gene3D" id="3.90.550.10">
    <property type="entry name" value="Spore Coat Polysaccharide Biosynthesis Protein SpsA, Chain A"/>
    <property type="match status" value="1"/>
</dbReference>
<dbReference type="InterPro" id="IPR001173">
    <property type="entry name" value="Glyco_trans_2-like"/>
</dbReference>
<dbReference type="InterPro" id="IPR050321">
    <property type="entry name" value="Glycosyltr_2/OpgH_subfam"/>
</dbReference>
<dbReference type="InterPro" id="IPR029044">
    <property type="entry name" value="Nucleotide-diphossugar_trans"/>
</dbReference>
<dbReference type="NCBIfam" id="NF003958">
    <property type="entry name" value="PRK05454.2-1"/>
    <property type="match status" value="1"/>
</dbReference>
<dbReference type="NCBIfam" id="NF003959">
    <property type="entry name" value="PRK05454.2-2"/>
    <property type="match status" value="1"/>
</dbReference>
<dbReference type="NCBIfam" id="NF003962">
    <property type="entry name" value="PRK05454.2-5"/>
    <property type="match status" value="1"/>
</dbReference>
<dbReference type="PANTHER" id="PTHR43867">
    <property type="entry name" value="CELLULOSE SYNTHASE CATALYTIC SUBUNIT A [UDP-FORMING]"/>
    <property type="match status" value="1"/>
</dbReference>
<dbReference type="PANTHER" id="PTHR43867:SF5">
    <property type="entry name" value="GLUCANS BIOSYNTHESIS GLUCOSYLTRANSFERASE H"/>
    <property type="match status" value="1"/>
</dbReference>
<dbReference type="Pfam" id="PF13632">
    <property type="entry name" value="Glyco_trans_2_3"/>
    <property type="match status" value="1"/>
</dbReference>
<dbReference type="SUPFAM" id="SSF53448">
    <property type="entry name" value="Nucleotide-diphospho-sugar transferases"/>
    <property type="match status" value="1"/>
</dbReference>
<gene>
    <name type="primary">opgH</name>
    <name type="ordered locus">RHOS4_17340</name>
    <name type="ORF">RSP_0127</name>
</gene>
<accession>Q9FA52</accession>
<accession>Q3J1N2</accession>
<organism>
    <name type="scientific">Cereibacter sphaeroides (strain ATCC 17023 / DSM 158 / JCM 6121 / CCUG 31486 / LMG 2827 / NBRC 12203 / NCIMB 8253 / ATH 2.4.1.)</name>
    <name type="common">Rhodobacter sphaeroides</name>
    <dbReference type="NCBI Taxonomy" id="272943"/>
    <lineage>
        <taxon>Bacteria</taxon>
        <taxon>Pseudomonadati</taxon>
        <taxon>Pseudomonadota</taxon>
        <taxon>Alphaproteobacteria</taxon>
        <taxon>Rhodobacterales</taxon>
        <taxon>Paracoccaceae</taxon>
        <taxon>Cereibacter</taxon>
    </lineage>
</organism>
<proteinExistence type="inferred from homology"/>
<sequence>MPAERRRRAVTLASRLVAAAISLTAAAGAFFLFLQFGSTDGLDSMDITRSVLILVSTSWLGWGAAHAVLGLFSRPQRPANVSPDAPISTRTVILVPVYNEDPVATFSRIAAMDASLAATPWRDLFHFAILSDTRDEAIAARERFWFLRLLRERDAEGRIFYRRRAVNRGRKAGNIEDFIQKSGSAYPFAVILDADSLMEGETLVDMVRRMEAEPRLGLLQTLPVVTKARARFGRSMQFSAALHAPVFARGLAMMQGRTGPFWGHNAIVRVQAFAESCGLPELSGPPPFGGHVMSHDYVEAALLARAGWIVRFDDDIRGSYEEGPENLVDHAKRDRRWCQGNLQHGRILFAPGLCGWNRFVFLQGIMAYIAPLFWLGFIMASIAAPFFAPPLDYFPVPYWPFPVFPSDETWKAIGLAVGIFGLLLLPKLMIAIEAIVTGRAAGFGGAGRVLVSTLAELVFSSIIAPILMAFQTRSVLQVLLGRDGGWPTNNRGDGSLSVAQAWSASHWIVTWGLIGIGATYYFAPGLVPWLLPVALPMIFSPLVIAVTSKRSRSALFTMPLEVAPTPVLLAHDAILADWERSPAPEAVPALAVSHA</sequence>
<comment type="function">
    <text evidence="1">Involved in the biosynthesis of osmoregulated periplasmic glucans (OPGs).</text>
</comment>
<comment type="pathway">
    <text>Glycan metabolism; osmoregulated periplasmic glucan (OPG) biosynthesis.</text>
</comment>
<comment type="subcellular location">
    <subcellularLocation>
        <location evidence="1">Cell inner membrane</location>
        <topology evidence="1">Multi-pass membrane protein</topology>
    </subcellularLocation>
</comment>
<comment type="similarity">
    <text evidence="3">Belongs to the glycosyltransferase 2 family. OpgH subfamily.</text>
</comment>